<evidence type="ECO:0000255" key="1">
    <source>
        <dbReference type="HAMAP-Rule" id="MF_00434"/>
    </source>
</evidence>
<comment type="catalytic activity">
    <reaction evidence="1">
        <text>(4aS,6R)-4a-hydroxy-L-erythro-5,6,7,8-tetrahydrobiopterin = (6R)-L-erythro-6,7-dihydrobiopterin + H2O</text>
        <dbReference type="Rhea" id="RHEA:11920"/>
        <dbReference type="ChEBI" id="CHEBI:15377"/>
        <dbReference type="ChEBI" id="CHEBI:15642"/>
        <dbReference type="ChEBI" id="CHEBI:43120"/>
        <dbReference type="EC" id="4.2.1.96"/>
    </reaction>
</comment>
<comment type="similarity">
    <text evidence="1">Belongs to the pterin-4-alpha-carbinolamine dehydratase family.</text>
</comment>
<protein>
    <recommendedName>
        <fullName evidence="1">Putative pterin-4-alpha-carbinolamine dehydratase</fullName>
        <shortName evidence="1">PHS</shortName>
        <ecNumber evidence="1">4.2.1.96</ecNumber>
    </recommendedName>
    <alternativeName>
        <fullName evidence="1">4-alpha-hydroxy-tetrahydropterin dehydratase</fullName>
    </alternativeName>
    <alternativeName>
        <fullName evidence="1">Pterin carbinolamine dehydratase</fullName>
        <shortName evidence="1">PCD</shortName>
    </alternativeName>
</protein>
<feature type="chain" id="PRO_0000063069" description="Putative pterin-4-alpha-carbinolamine dehydratase">
    <location>
        <begin position="1"/>
        <end position="93"/>
    </location>
</feature>
<name>PHS_NOSS1</name>
<dbReference type="EC" id="4.2.1.96" evidence="1"/>
<dbReference type="EMBL" id="BA000019">
    <property type="protein sequence ID" value="BAB76248.1"/>
    <property type="molecule type" value="Genomic_DNA"/>
</dbReference>
<dbReference type="PIR" id="AE2374">
    <property type="entry name" value="AE2374"/>
</dbReference>
<dbReference type="RefSeq" id="WP_010998681.1">
    <property type="nucleotide sequence ID" value="NZ_RSCN01000007.1"/>
</dbReference>
<dbReference type="SMR" id="Q8YNL6"/>
<dbReference type="KEGG" id="ana:asr4549"/>
<dbReference type="eggNOG" id="COG2154">
    <property type="taxonomic scope" value="Bacteria"/>
</dbReference>
<dbReference type="OrthoDB" id="9794987at2"/>
<dbReference type="Proteomes" id="UP000002483">
    <property type="component" value="Chromosome"/>
</dbReference>
<dbReference type="GO" id="GO:0008124">
    <property type="term" value="F:4-alpha-hydroxytetrahydrobiopterin dehydratase activity"/>
    <property type="evidence" value="ECO:0007669"/>
    <property type="project" value="UniProtKB-UniRule"/>
</dbReference>
<dbReference type="GO" id="GO:0006729">
    <property type="term" value="P:tetrahydrobiopterin biosynthetic process"/>
    <property type="evidence" value="ECO:0007669"/>
    <property type="project" value="InterPro"/>
</dbReference>
<dbReference type="CDD" id="cd00488">
    <property type="entry name" value="PCD_DCoH"/>
    <property type="match status" value="1"/>
</dbReference>
<dbReference type="Gene3D" id="3.30.1360.20">
    <property type="entry name" value="Transcriptional coactivator/pterin dehydratase"/>
    <property type="match status" value="1"/>
</dbReference>
<dbReference type="HAMAP" id="MF_00434">
    <property type="entry name" value="Pterin_4_alpha"/>
    <property type="match status" value="1"/>
</dbReference>
<dbReference type="InterPro" id="IPR036428">
    <property type="entry name" value="PCD_sf"/>
</dbReference>
<dbReference type="InterPro" id="IPR001533">
    <property type="entry name" value="Pterin_deHydtase"/>
</dbReference>
<dbReference type="NCBIfam" id="NF002017">
    <property type="entry name" value="PRK00823.1-2"/>
    <property type="match status" value="1"/>
</dbReference>
<dbReference type="PANTHER" id="PTHR12599">
    <property type="entry name" value="PTERIN-4-ALPHA-CARBINOLAMINE DEHYDRATASE"/>
    <property type="match status" value="1"/>
</dbReference>
<dbReference type="PANTHER" id="PTHR12599:SF0">
    <property type="entry name" value="PTERIN-4-ALPHA-CARBINOLAMINE DEHYDRATASE"/>
    <property type="match status" value="1"/>
</dbReference>
<dbReference type="Pfam" id="PF01329">
    <property type="entry name" value="Pterin_4a"/>
    <property type="match status" value="1"/>
</dbReference>
<dbReference type="SUPFAM" id="SSF55248">
    <property type="entry name" value="PCD-like"/>
    <property type="match status" value="1"/>
</dbReference>
<sequence>MAQLLSDVEIQSQASKLSGWTLEGSKLQTTRKFKDFIEAIAFVNKLVEPAESAGHHPDIEISYNKVKVTLTTHDAGGLTQKDFDVAATISQIN</sequence>
<proteinExistence type="inferred from homology"/>
<reference key="1">
    <citation type="journal article" date="2001" name="DNA Res.">
        <title>Complete genomic sequence of the filamentous nitrogen-fixing cyanobacterium Anabaena sp. strain PCC 7120.</title>
        <authorList>
            <person name="Kaneko T."/>
            <person name="Nakamura Y."/>
            <person name="Wolk C.P."/>
            <person name="Kuritz T."/>
            <person name="Sasamoto S."/>
            <person name="Watanabe A."/>
            <person name="Iriguchi M."/>
            <person name="Ishikawa A."/>
            <person name="Kawashima K."/>
            <person name="Kimura T."/>
            <person name="Kishida Y."/>
            <person name="Kohara M."/>
            <person name="Matsumoto M."/>
            <person name="Matsuno A."/>
            <person name="Muraki A."/>
            <person name="Nakazaki N."/>
            <person name="Shimpo S."/>
            <person name="Sugimoto M."/>
            <person name="Takazawa M."/>
            <person name="Yamada M."/>
            <person name="Yasuda M."/>
            <person name="Tabata S."/>
        </authorList>
    </citation>
    <scope>NUCLEOTIDE SEQUENCE [LARGE SCALE GENOMIC DNA]</scope>
    <source>
        <strain>PCC 7120 / SAG 25.82 / UTEX 2576</strain>
    </source>
</reference>
<organism>
    <name type="scientific">Nostoc sp. (strain PCC 7120 / SAG 25.82 / UTEX 2576)</name>
    <dbReference type="NCBI Taxonomy" id="103690"/>
    <lineage>
        <taxon>Bacteria</taxon>
        <taxon>Bacillati</taxon>
        <taxon>Cyanobacteriota</taxon>
        <taxon>Cyanophyceae</taxon>
        <taxon>Nostocales</taxon>
        <taxon>Nostocaceae</taxon>
        <taxon>Nostoc</taxon>
    </lineage>
</organism>
<keyword id="KW-0456">Lyase</keyword>
<keyword id="KW-1185">Reference proteome</keyword>
<accession>Q8YNL6</accession>
<gene>
    <name type="ordered locus">asr4549</name>
</gene>